<gene>
    <name type="ordered locus">SYO3AOP1_0257</name>
</gene>
<name>Y257_SULSY</name>
<comment type="similarity">
    <text evidence="1">Belongs to the UPF0235 family.</text>
</comment>
<reference key="1">
    <citation type="journal article" date="2009" name="J. Bacteriol.">
        <title>Complete and draft genome sequences of six members of the Aquificales.</title>
        <authorList>
            <person name="Reysenbach A.-L."/>
            <person name="Hamamura N."/>
            <person name="Podar M."/>
            <person name="Griffiths E."/>
            <person name="Ferreira S."/>
            <person name="Hochstein R."/>
            <person name="Heidelberg J."/>
            <person name="Johnson J."/>
            <person name="Mead D."/>
            <person name="Pohorille A."/>
            <person name="Sarmiento M."/>
            <person name="Schweighofer K."/>
            <person name="Seshadri R."/>
            <person name="Voytek M.A."/>
        </authorList>
    </citation>
    <scope>NUCLEOTIDE SEQUENCE [LARGE SCALE GENOMIC DNA]</scope>
    <source>
        <strain>YO3AOP1</strain>
    </source>
</reference>
<feature type="chain" id="PRO_1000212357" description="UPF0235 protein SYO3AOP1_0257">
    <location>
        <begin position="1"/>
        <end position="73"/>
    </location>
</feature>
<protein>
    <recommendedName>
        <fullName evidence="1">UPF0235 protein SYO3AOP1_0257</fullName>
    </recommendedName>
</protein>
<accession>B2V7H9</accession>
<proteinExistence type="inferred from homology"/>
<dbReference type="EMBL" id="CP001080">
    <property type="protein sequence ID" value="ACD65902.1"/>
    <property type="molecule type" value="Genomic_DNA"/>
</dbReference>
<dbReference type="RefSeq" id="WP_012458991.1">
    <property type="nucleotide sequence ID" value="NC_010730.1"/>
</dbReference>
<dbReference type="SMR" id="B2V7H9"/>
<dbReference type="STRING" id="436114.SYO3AOP1_0257"/>
<dbReference type="KEGG" id="sul:SYO3AOP1_0257"/>
<dbReference type="eggNOG" id="COG1872">
    <property type="taxonomic scope" value="Bacteria"/>
</dbReference>
<dbReference type="HOGENOM" id="CLU_130694_5_3_0"/>
<dbReference type="GO" id="GO:0005737">
    <property type="term" value="C:cytoplasm"/>
    <property type="evidence" value="ECO:0007669"/>
    <property type="project" value="TreeGrafter"/>
</dbReference>
<dbReference type="Gene3D" id="3.30.1200.10">
    <property type="entry name" value="YggU-like"/>
    <property type="match status" value="1"/>
</dbReference>
<dbReference type="HAMAP" id="MF_00634">
    <property type="entry name" value="UPF0235"/>
    <property type="match status" value="1"/>
</dbReference>
<dbReference type="InterPro" id="IPR003746">
    <property type="entry name" value="DUF167"/>
</dbReference>
<dbReference type="InterPro" id="IPR036591">
    <property type="entry name" value="YggU-like_sf"/>
</dbReference>
<dbReference type="NCBIfam" id="TIGR00251">
    <property type="entry name" value="DUF167 family protein"/>
    <property type="match status" value="1"/>
</dbReference>
<dbReference type="PANTHER" id="PTHR13420">
    <property type="entry name" value="UPF0235 PROTEIN C15ORF40"/>
    <property type="match status" value="1"/>
</dbReference>
<dbReference type="PANTHER" id="PTHR13420:SF7">
    <property type="entry name" value="UPF0235 PROTEIN C15ORF40"/>
    <property type="match status" value="1"/>
</dbReference>
<dbReference type="Pfam" id="PF02594">
    <property type="entry name" value="DUF167"/>
    <property type="match status" value="1"/>
</dbReference>
<dbReference type="SMART" id="SM01152">
    <property type="entry name" value="DUF167"/>
    <property type="match status" value="1"/>
</dbReference>
<dbReference type="SUPFAM" id="SSF69786">
    <property type="entry name" value="YggU-like"/>
    <property type="match status" value="1"/>
</dbReference>
<sequence>MRIKVKVKPGTSKNEVKKIDENLYEVRTTTIPEKGKANEKVVELLSDFFDVPKSKIKIVKGQTSREKEVEVGE</sequence>
<organism>
    <name type="scientific">Sulfurihydrogenibium sp. (strain YO3AOP1)</name>
    <dbReference type="NCBI Taxonomy" id="436114"/>
    <lineage>
        <taxon>Bacteria</taxon>
        <taxon>Pseudomonadati</taxon>
        <taxon>Aquificota</taxon>
        <taxon>Aquificia</taxon>
        <taxon>Aquificales</taxon>
        <taxon>Hydrogenothermaceae</taxon>
        <taxon>Sulfurihydrogenibium</taxon>
    </lineage>
</organism>
<evidence type="ECO:0000255" key="1">
    <source>
        <dbReference type="HAMAP-Rule" id="MF_00634"/>
    </source>
</evidence>